<name>RUNX1_CAEEL</name>
<comment type="function">
    <text evidence="1 4 5 6 7 8 9 10 11">Transcription factor (By similarity). Binds to regulatory DNA sequences in order to modulate transcription; negatively autoregulates its own expression, perhaps dependent upon CBF beta homolog bro-1 (PubMed:18158917). Promotes proliferation, and prevents differentiation, of seam cells, a stem cell-like lineage, acting in concert with bro-1 (PubMed:31740621). Required for controlling cell proliferation in the seam cells, perhaps by repressing expression of cyclin-dependent kinase inhibitor cki-1 (PubMed:16236764, PubMed:17933794). Inhibition of seam cell differentiation is regulated by rnt-1 and bro-1, perhaps acting upstream of pop-1, by antagonizing pop-1 repressor function (PubMed:31740621). Required for asymmetrical cell divisions in the lineage derived from a posterior embryonic seam cell, the T blast cell, and for asymmetric expression of zinc finger protein tlp-1 (PubMed:16226243). Regulates growth and male tail development (PubMed:15385167, PubMed:16226243, PubMed:16236764, PubMed:31083672). Involved in the oxidative stress response, perhaps downstream of the p38 MAP kinase pathway, and acting as part of a negative feedback loop via a transcriptional target gene, tyrosine-protein phosphatase vhp-1 (PubMed:22308034). Positively modulates dopaminergic signaling in a non-cell autonomous manner (PubMed:31083672). May be involved in TGF-beta signaling (PubMed:15385167).</text>
</comment>
<comment type="subunit">
    <text evidence="4 7">Interacts with CBFbeta homolog bro-1; acts to increase the affinity and specificity of interaction of rnt-1 with DNA (PubMed:17933794). Interacts with TGF-beta pathway protein sma-4 (PubMed:15385167).</text>
</comment>
<comment type="subcellular location">
    <subcellularLocation>
        <location evidence="2 5 6 11">Nucleus</location>
    </subcellularLocation>
    <text evidence="11">High level of nuclear localization in interphase seam cells before the symmetric larval stage L2 divisions, but subsequently rnt-1 disappears during mitosis, and largely remains absent when the nuclei reform in telophase.</text>
</comment>
<comment type="tissue specificity">
    <text evidence="9">Expressed in the intestine.</text>
</comment>
<comment type="developmental stage">
    <text evidence="4 5 6 10">Expressed in seam cells in embryos from around 260 minutes post fertilization and in all subsequent developmental stages (PubMed:16226243, PubMed:16236764). Also expressed at the comma stage, at about 400 min, in the body wall muscle cells (PubMed:16226243). Expressed in males, in the descendant cells of the V5, V6, and T lineages, which include all the A-type neuron, the B-type neuron, and the structural cells of the male-specific sense organs, known as rays, from the mid-L3 larval stage to L4 stage (PubMed:15385167). Expressed in dopaminergic neurons at larval stage L4 (PubMed:31083672).</text>
</comment>
<comment type="PTM">
    <text evidence="9">May be ubiquitinated in order to be targeted for proteasome-mediated degradation in intestinal cells.</text>
</comment>
<comment type="PTM">
    <text evidence="9">May be phosphorylated by members of the p38 MAP kinase pathway.</text>
</comment>
<comment type="disruption phenotype">
    <text evidence="6">RNAi-mediated knockdown causes embryonic lethality and missing male-specific sense organs, known as rays (PubMed:16236764). In hermaphrodites, RNAi-mediated knockdown causes a slight (5%) reduction in body length at adulthood (PubMed:16236764).</text>
</comment>
<gene>
    <name evidence="16" type="primary">rnt-1</name>
    <name evidence="16" type="synonym">mab-2</name>
    <name evidence="13 16" type="synonym">run-1</name>
    <name evidence="16" type="ORF">B0414.2</name>
</gene>
<keyword id="KW-0217">Developmental protein</keyword>
<keyword id="KW-0539">Nucleus</keyword>
<keyword id="KW-0597">Phosphoprotein</keyword>
<keyword id="KW-1185">Reference proteome</keyword>
<keyword id="KW-0804">Transcription</keyword>
<keyword id="KW-0805">Transcription regulation</keyword>
<keyword id="KW-0832">Ubl conjugation</keyword>
<sequence>MTNVFHHVRNFIEQQPAPAKTLEKSSSPNILYTALPKHWRSNKSFQEPFYVVLLTPVPDNTEVSIWAGNDEKPCEEVRNEKAKVHRQVAKFNDLRFVGRSGRGRKFHLTIVIHSAPMMVATVKNVIKVTVDGPRDARIPKPQGSLKRQAEQQTIFPNDIIRTPGPPMPMTMIPPPWFPLPMTQTFPPSFFPLISPGPHPSISAALWKIHSESMKTPIKQKVEQENVSLNTSTCLSSPSIFITPTSDDRKLKRPSSPRSITKSSETSINLIQETPESVESKRRRNVSITSSNSSSPTIWRPF</sequence>
<proteinExistence type="evidence at protein level"/>
<organism evidence="15">
    <name type="scientific">Caenorhabditis elegans</name>
    <dbReference type="NCBI Taxonomy" id="6239"/>
    <lineage>
        <taxon>Eukaryota</taxon>
        <taxon>Metazoa</taxon>
        <taxon>Ecdysozoa</taxon>
        <taxon>Nematoda</taxon>
        <taxon>Chromadorea</taxon>
        <taxon>Rhabditida</taxon>
        <taxon>Rhabditina</taxon>
        <taxon>Rhabditomorpha</taxon>
        <taxon>Rhabditoidea</taxon>
        <taxon>Rhabditidae</taxon>
        <taxon>Peloderinae</taxon>
        <taxon>Caenorhabditis</taxon>
    </lineage>
</organism>
<reference evidence="13" key="1">
    <citation type="journal article" date="2000" name="Gene">
        <title>cDNA cloning of run, a Caenorhabditis elegans Runt domain encoding gene.</title>
        <authorList>
            <person name="Bae S.-C."/>
            <person name="Lee J."/>
        </authorList>
    </citation>
    <scope>NUCLEOTIDE SEQUENCE [MRNA]</scope>
</reference>
<reference evidence="14" key="2">
    <citation type="submission" date="1999-05" db="EMBL/GenBank/DDBJ databases">
        <title>cDNA of a Homolog for Drosophila runt from C. elegans.</title>
        <authorList>
            <person name="Kagoshima H."/>
            <person name="Burglin T.R."/>
        </authorList>
    </citation>
    <scope>NUCLEOTIDE SEQUENCE [MRNA]</scope>
</reference>
<reference evidence="15" key="3">
    <citation type="journal article" date="1998" name="Science">
        <title>Genome sequence of the nematode C. elegans: a platform for investigating biology.</title>
        <authorList>
            <consortium name="The C. elegans sequencing consortium"/>
        </authorList>
    </citation>
    <scope>NUCLEOTIDE SEQUENCE [LARGE SCALE GENOMIC DNA]</scope>
    <source>
        <strain evidence="15">Bristol N2</strain>
    </source>
</reference>
<reference evidence="12" key="4">
    <citation type="journal article" date="2004" name="Dev. Biol.">
        <title>RNT-1, the C. elegans homologue of mammalian RUNX transcription factors, regulates body size and male tail development.</title>
        <authorList>
            <person name="Ji Y.J."/>
            <person name="Nam S."/>
            <person name="Jin Y.H."/>
            <person name="Cha E.J."/>
            <person name="Lee K.S."/>
            <person name="Choi K.Y."/>
            <person name="Song H.O."/>
            <person name="Lee J."/>
            <person name="Bae S.C."/>
            <person name="Ahnn J."/>
        </authorList>
    </citation>
    <scope>FUNCTION</scope>
    <scope>INTERACTION WITH SMA-4</scope>
    <scope>DEVELOPMENTAL STAGE</scope>
</reference>
<reference evidence="12" key="5">
    <citation type="journal article" date="2005" name="Development">
        <title>mab-2 encodes RNT-1, a C. elegans Runx homologue essential for controlling cell proliferation in a stem cell-like developmental lineage.</title>
        <authorList>
            <person name="Nimmo R."/>
            <person name="Antebi A."/>
            <person name="Woollard A."/>
        </authorList>
    </citation>
    <scope>FUNCTION</scope>
    <scope>SUBCELLULAR LOCATION</scope>
    <scope>DEVELOPMENTAL STAGE</scope>
    <scope>DISRUPTION PHENOTYPE</scope>
    <scope>MUTAGENESIS OF 39-TRP--PHE-301 AND ILE-112</scope>
</reference>
<reference evidence="12" key="6">
    <citation type="journal article" date="2005" name="Dev. Biol.">
        <title>The C. elegans RUNX transcription factor RNT-1/MAB-2 is required for asymmetrical cell division of the T blast cell.</title>
        <authorList>
            <person name="Kagoshima H."/>
            <person name="Sawa H."/>
            <person name="Mitani S."/>
            <person name="Burglin T.R."/>
            <person name="Shigesada K."/>
            <person name="Kohara Y."/>
        </authorList>
    </citation>
    <scope>FUNCTION</scope>
    <scope>SUBCELLULAR LOCATION</scope>
    <scope>DEVELOPMENTAL STAGE</scope>
</reference>
<reference evidence="12" key="7">
    <citation type="journal article" date="2007" name="Development">
        <title>The C. elegans CBFbeta homologue BRO-1 interacts with the Runx factor, RNT-1, to promote stem cell proliferation and self-renewal.</title>
        <authorList>
            <person name="Kagoshima H."/>
            <person name="Nimmo R."/>
            <person name="Saad N."/>
            <person name="Tanaka J."/>
            <person name="Miwa Y."/>
            <person name="Mitani S."/>
            <person name="Kohara Y."/>
            <person name="Woollard A."/>
        </authorList>
    </citation>
    <scope>FUNCTION</scope>
    <scope>INTERACTION WITH BRO-1</scope>
    <scope>MUTAGENESIS OF ILE-112</scope>
</reference>
<reference evidence="12" key="8">
    <citation type="journal article" date="2008" name="Biochem. Biophys. Res. Commun.">
        <title>Regulation of rnt-1 expression mediated by the opposing effects of BRO-1 and DBL-1 in the nematode Caenorhabditis elegans.</title>
        <authorList>
            <person name="Shim J."/>
            <person name="Lee J."/>
        </authorList>
    </citation>
    <scope>FUNCTION</scope>
</reference>
<reference evidence="12" key="9">
    <citation type="journal article" date="2012" name="J. Biol. Chem.">
        <title>Stabilization of RNT-1 protein, runt-related transcription factor (RUNX) protein homolog of Caenorhabditis elegans, by oxidative stress through mitogen-activated protein kinase pathway.</title>
        <authorList>
            <person name="Lee K."/>
            <person name="Shim J."/>
            <person name="Bae J."/>
            <person name="Kim Y.J."/>
            <person name="Lee J."/>
        </authorList>
    </citation>
    <scope>FUNCTION</scope>
    <scope>TISSUE SPECIFICITY</scope>
    <scope>PHOSPHORYLATION AT SER-255</scope>
    <scope>UBIQUITINATION</scope>
    <scope>MUTAGENESIS OF SER-255</scope>
</reference>
<reference evidence="12" key="10">
    <citation type="journal article" date="2019" name="Development">
        <title>C. elegans Runx/CBFbeta suppresses POP-1 TCF to convert asymmetric to proliferative division of stem cell-like seam cells.</title>
        <authorList>
            <person name="van der Horst S.E.M."/>
            <person name="Cravo J."/>
            <person name="Woollard A."/>
            <person name="Teapal J."/>
            <person name="van den Heuvel S."/>
        </authorList>
    </citation>
    <scope>FUNCTION</scope>
    <scope>SUBCELLULAR LOCATION</scope>
</reference>
<reference evidence="12" key="11">
    <citation type="journal article" date="2019" name="PLoS ONE">
        <title>Dopamine-dependent, swimming-induced paralysis arises as a consequence of loss of function mutations in the RUNX transcription factor RNT-1.</title>
        <authorList>
            <person name="Robinson S.B."/>
            <person name="Refai O."/>
            <person name="Hardaway J.A."/>
            <person name="Sturgeon S."/>
            <person name="Popay T."/>
            <person name="Bermingham D.P."/>
            <person name="Freeman P."/>
            <person name="Wright J."/>
            <person name="Blakely R.D."/>
        </authorList>
    </citation>
    <scope>FUNCTION</scope>
    <scope>DEVELOPMENTAL STAGE</scope>
    <scope>MUTAGENESIS OF 104-ARG--PHE-301</scope>
</reference>
<dbReference type="EMBL" id="AF153275">
    <property type="protein sequence ID" value="AAD54940.1"/>
    <property type="molecule type" value="mRNA"/>
</dbReference>
<dbReference type="EMBL" id="AB027412">
    <property type="protein sequence ID" value="BAA77765.1"/>
    <property type="molecule type" value="mRNA"/>
</dbReference>
<dbReference type="EMBL" id="BX284601">
    <property type="protein sequence ID" value="CCD61898.1"/>
    <property type="molecule type" value="Genomic_DNA"/>
</dbReference>
<dbReference type="PIR" id="T15229">
    <property type="entry name" value="T15229"/>
</dbReference>
<dbReference type="PIR" id="T37326">
    <property type="entry name" value="T37326"/>
</dbReference>
<dbReference type="RefSeq" id="NP_001370335.1">
    <property type="nucleotide sequence ID" value="NM_001383147.2"/>
</dbReference>
<dbReference type="RefSeq" id="NP_491679.1">
    <property type="nucleotide sequence ID" value="NM_059278.5"/>
</dbReference>
<dbReference type="SMR" id="G5EFQ5"/>
<dbReference type="ELM" id="G5EFQ5"/>
<dbReference type="FunCoup" id="G5EFQ5">
    <property type="interactions" value="59"/>
</dbReference>
<dbReference type="IntAct" id="G5EFQ5">
    <property type="interactions" value="2"/>
</dbReference>
<dbReference type="STRING" id="6239.B0414.2.2"/>
<dbReference type="iPTMnet" id="G5EFQ5"/>
<dbReference type="PaxDb" id="6239-B0414.2"/>
<dbReference type="EnsemblMetazoa" id="B0414.2.1">
    <property type="protein sequence ID" value="B0414.2.1"/>
    <property type="gene ID" value="WBGene00004393"/>
</dbReference>
<dbReference type="EnsemblMetazoa" id="B0414.2.2">
    <property type="protein sequence ID" value="B0414.2.2"/>
    <property type="gene ID" value="WBGene00004393"/>
</dbReference>
<dbReference type="EnsemblMetazoa" id="B0414.2.3">
    <property type="protein sequence ID" value="B0414.2.3"/>
    <property type="gene ID" value="WBGene00004393"/>
</dbReference>
<dbReference type="GeneID" id="172243"/>
<dbReference type="AGR" id="WB:WBGene00004393"/>
<dbReference type="WormBase" id="B0414.2">
    <property type="protein sequence ID" value="CE24772"/>
    <property type="gene ID" value="WBGene00004393"/>
    <property type="gene designation" value="rnt-1"/>
</dbReference>
<dbReference type="eggNOG" id="KOG3982">
    <property type="taxonomic scope" value="Eukaryota"/>
</dbReference>
<dbReference type="GeneTree" id="ENSGT00940000170974"/>
<dbReference type="HOGENOM" id="CLU_944104_0_0_1"/>
<dbReference type="InParanoid" id="G5EFQ5"/>
<dbReference type="OMA" id="MIPPPWW"/>
<dbReference type="OrthoDB" id="10029800at2759"/>
<dbReference type="Reactome" id="R-CEL-549127">
    <property type="pathway name" value="Organic cation transport"/>
</dbReference>
<dbReference type="Reactome" id="R-CEL-8877330">
    <property type="pathway name" value="RUNX1 and FOXP3 control the development of regulatory T lymphocytes (Tregs)"/>
</dbReference>
<dbReference type="Reactome" id="R-CEL-8878166">
    <property type="pathway name" value="Transcriptional regulation by RUNX2"/>
</dbReference>
<dbReference type="Reactome" id="R-CEL-8934593">
    <property type="pathway name" value="Regulation of RUNX1 Expression and Activity"/>
</dbReference>
<dbReference type="Reactome" id="R-CEL-8936459">
    <property type="pathway name" value="RUNX1 regulates genes involved in megakaryocyte differentiation and platelet function"/>
</dbReference>
<dbReference type="Reactome" id="R-CEL-8939236">
    <property type="pathway name" value="RUNX1 regulates transcription of genes involved in differentiation of HSCs"/>
</dbReference>
<dbReference type="Reactome" id="R-CEL-8939243">
    <property type="pathway name" value="RUNX1 interacts with co-factors whose precise effect on RUNX1 targets is not known"/>
</dbReference>
<dbReference type="Reactome" id="R-CEL-8939245">
    <property type="pathway name" value="RUNX1 regulates transcription of genes involved in BCR signaling"/>
</dbReference>
<dbReference type="Reactome" id="R-CEL-8939246">
    <property type="pathway name" value="RUNX1 regulates transcription of genes involved in differentiation of myeloid cells"/>
</dbReference>
<dbReference type="Reactome" id="R-CEL-8939247">
    <property type="pathway name" value="RUNX1 regulates transcription of genes involved in interleukin signaling"/>
</dbReference>
<dbReference type="Reactome" id="R-CEL-8939902">
    <property type="pathway name" value="Regulation of RUNX2 expression and activity"/>
</dbReference>
<dbReference type="Reactome" id="R-CEL-8941326">
    <property type="pathway name" value="RUNX2 regulates bone development"/>
</dbReference>
<dbReference type="Reactome" id="R-CEL-8941855">
    <property type="pathway name" value="RUNX3 regulates CDKN1A transcription"/>
</dbReference>
<dbReference type="Reactome" id="R-CEL-8941858">
    <property type="pathway name" value="Regulation of RUNX3 expression and activity"/>
</dbReference>
<dbReference type="Reactome" id="R-CEL-8951430">
    <property type="pathway name" value="RUNX3 regulates WNT signaling"/>
</dbReference>
<dbReference type="Reactome" id="R-CEL-8951671">
    <property type="pathway name" value="RUNX3 regulates YAP1-mediated transcription"/>
</dbReference>
<dbReference type="Reactome" id="R-CEL-8951936">
    <property type="pathway name" value="RUNX3 regulates p14-ARF"/>
</dbReference>
<dbReference type="PRO" id="PR:G5EFQ5"/>
<dbReference type="Proteomes" id="UP000001940">
    <property type="component" value="Chromosome I"/>
</dbReference>
<dbReference type="Bgee" id="WBGene00004393">
    <property type="expression patterns" value="Expressed in intestine and 4 other cell types or tissues"/>
</dbReference>
<dbReference type="GO" id="GO:0016513">
    <property type="term" value="C:core-binding factor complex"/>
    <property type="evidence" value="ECO:0000314"/>
    <property type="project" value="UniProtKB"/>
</dbReference>
<dbReference type="GO" id="GO:0005634">
    <property type="term" value="C:nucleus"/>
    <property type="evidence" value="ECO:0000314"/>
    <property type="project" value="UniProtKB"/>
</dbReference>
<dbReference type="GO" id="GO:0005524">
    <property type="term" value="F:ATP binding"/>
    <property type="evidence" value="ECO:0007669"/>
    <property type="project" value="InterPro"/>
</dbReference>
<dbReference type="GO" id="GO:0001228">
    <property type="term" value="F:DNA-binding transcription activator activity, RNA polymerase II-specific"/>
    <property type="evidence" value="ECO:0000315"/>
    <property type="project" value="UniProtKB"/>
</dbReference>
<dbReference type="GO" id="GO:0000981">
    <property type="term" value="F:DNA-binding transcription factor activity, RNA polymerase II-specific"/>
    <property type="evidence" value="ECO:0000315"/>
    <property type="project" value="UniProtKB"/>
</dbReference>
<dbReference type="GO" id="GO:0000978">
    <property type="term" value="F:RNA polymerase II cis-regulatory region sequence-specific DNA binding"/>
    <property type="evidence" value="ECO:0000315"/>
    <property type="project" value="UniProtKB"/>
</dbReference>
<dbReference type="GO" id="GO:0043565">
    <property type="term" value="F:sequence-specific DNA binding"/>
    <property type="evidence" value="ECO:0000314"/>
    <property type="project" value="UniProtKB"/>
</dbReference>
<dbReference type="GO" id="GO:0046332">
    <property type="term" value="F:SMAD binding"/>
    <property type="evidence" value="ECO:0000353"/>
    <property type="project" value="WormBase"/>
</dbReference>
<dbReference type="GO" id="GO:0008356">
    <property type="term" value="P:asymmetric cell division"/>
    <property type="evidence" value="ECO:0000315"/>
    <property type="project" value="UniProtKB"/>
</dbReference>
<dbReference type="GO" id="GO:0098722">
    <property type="term" value="P:asymmetric stem cell division"/>
    <property type="evidence" value="ECO:0000316"/>
    <property type="project" value="UniProtKB"/>
</dbReference>
<dbReference type="GO" id="GO:0042417">
    <property type="term" value="P:dopamine metabolic process"/>
    <property type="evidence" value="ECO:0000315"/>
    <property type="project" value="UniProtKB"/>
</dbReference>
<dbReference type="GO" id="GO:0009792">
    <property type="term" value="P:embryo development ending in birth or egg hatching"/>
    <property type="evidence" value="ECO:0000315"/>
    <property type="project" value="WormBase"/>
</dbReference>
<dbReference type="GO" id="GO:0010629">
    <property type="term" value="P:negative regulation of gene expression"/>
    <property type="evidence" value="ECO:0000316"/>
    <property type="project" value="UniProtKB"/>
</dbReference>
<dbReference type="GO" id="GO:2000737">
    <property type="term" value="P:negative regulation of stem cell differentiation"/>
    <property type="evidence" value="ECO:0000316"/>
    <property type="project" value="UniProtKB"/>
</dbReference>
<dbReference type="GO" id="GO:0045138">
    <property type="term" value="P:nematode male tail tip morphogenesis"/>
    <property type="evidence" value="ECO:0000315"/>
    <property type="project" value="UniProtKB"/>
</dbReference>
<dbReference type="GO" id="GO:0008284">
    <property type="term" value="P:positive regulation of cell population proliferation"/>
    <property type="evidence" value="ECO:0000315"/>
    <property type="project" value="WormBase"/>
</dbReference>
<dbReference type="GO" id="GO:0010628">
    <property type="term" value="P:positive regulation of gene expression"/>
    <property type="evidence" value="ECO:0000315"/>
    <property type="project" value="UniProtKB"/>
</dbReference>
<dbReference type="GO" id="GO:0090326">
    <property type="term" value="P:positive regulation of locomotion involved in locomotory behavior"/>
    <property type="evidence" value="ECO:0000315"/>
    <property type="project" value="UniProtKB"/>
</dbReference>
<dbReference type="GO" id="GO:2000648">
    <property type="term" value="P:positive regulation of stem cell proliferation"/>
    <property type="evidence" value="ECO:0000316"/>
    <property type="project" value="UniProtKB"/>
</dbReference>
<dbReference type="GO" id="GO:0045944">
    <property type="term" value="P:positive regulation of transcription by RNA polymerase II"/>
    <property type="evidence" value="ECO:0000315"/>
    <property type="project" value="UniProtKB"/>
</dbReference>
<dbReference type="GO" id="GO:0006357">
    <property type="term" value="P:regulation of transcription by RNA polymerase II"/>
    <property type="evidence" value="ECO:0000315"/>
    <property type="project" value="UniProtKB"/>
</dbReference>
<dbReference type="GO" id="GO:0006970">
    <property type="term" value="P:response to osmotic stress"/>
    <property type="evidence" value="ECO:0000315"/>
    <property type="project" value="UniProtKB"/>
</dbReference>
<dbReference type="GO" id="GO:0006979">
    <property type="term" value="P:response to oxidative stress"/>
    <property type="evidence" value="ECO:0000315"/>
    <property type="project" value="UniProtKB"/>
</dbReference>
<dbReference type="Gene3D" id="2.60.40.720">
    <property type="match status" value="1"/>
</dbReference>
<dbReference type="InterPro" id="IPR000040">
    <property type="entry name" value="AML1_Runt"/>
</dbReference>
<dbReference type="InterPro" id="IPR008967">
    <property type="entry name" value="p53-like_TF_DNA-bd_sf"/>
</dbReference>
<dbReference type="InterPro" id="IPR012346">
    <property type="entry name" value="p53/RUNT-type_TF_DNA-bd_sf"/>
</dbReference>
<dbReference type="InterPro" id="IPR013524">
    <property type="entry name" value="Runt_dom"/>
</dbReference>
<dbReference type="PANTHER" id="PTHR11950">
    <property type="entry name" value="RUNT RELATED"/>
    <property type="match status" value="1"/>
</dbReference>
<dbReference type="PANTHER" id="PTHR11950:SF31">
    <property type="entry name" value="SEGMENTATION PROTEIN RUNT"/>
    <property type="match status" value="1"/>
</dbReference>
<dbReference type="Pfam" id="PF00853">
    <property type="entry name" value="Runt"/>
    <property type="match status" value="1"/>
</dbReference>
<dbReference type="PRINTS" id="PR00967">
    <property type="entry name" value="ONCOGENEAML1"/>
</dbReference>
<dbReference type="SUPFAM" id="SSF49417">
    <property type="entry name" value="p53-like transcription factors"/>
    <property type="match status" value="1"/>
</dbReference>
<dbReference type="PROSITE" id="PS51062">
    <property type="entry name" value="RUNT"/>
    <property type="match status" value="1"/>
</dbReference>
<protein>
    <recommendedName>
        <fullName evidence="12">Runt-related transcription factor rnt-1</fullName>
    </recommendedName>
</protein>
<feature type="chain" id="PRO_0000453625" description="Runt-related transcription factor rnt-1">
    <location>
        <begin position="1"/>
        <end position="301"/>
    </location>
</feature>
<feature type="domain" description="Runt" evidence="2">
    <location>
        <begin position="10"/>
        <end position="138"/>
    </location>
</feature>
<feature type="region of interest" description="Interaction with DNA">
    <location>
        <begin position="40"/>
        <end position="44"/>
    </location>
</feature>
<feature type="region of interest" description="Interaction with DNA">
    <location>
        <begin position="95"/>
        <end position="103"/>
    </location>
</feature>
<feature type="region of interest" description="Interaction with DNA">
    <location>
        <begin position="128"/>
        <end position="137"/>
    </location>
</feature>
<feature type="region of interest" description="Disordered" evidence="3">
    <location>
        <begin position="237"/>
        <end position="301"/>
    </location>
</feature>
<feature type="compositionally biased region" description="Polar residues" evidence="3">
    <location>
        <begin position="255"/>
        <end position="276"/>
    </location>
</feature>
<feature type="compositionally biased region" description="Low complexity" evidence="3">
    <location>
        <begin position="285"/>
        <end position="301"/>
    </location>
</feature>
<feature type="binding site" evidence="2">
    <location>
        <position position="99"/>
    </location>
    <ligand>
        <name>chloride</name>
        <dbReference type="ChEBI" id="CHEBI:17996"/>
    </ligand>
</feature>
<feature type="binding site" evidence="2">
    <location>
        <position position="130"/>
    </location>
    <ligand>
        <name>chloride</name>
        <dbReference type="ChEBI" id="CHEBI:17996"/>
    </ligand>
</feature>
<feature type="modified residue" description="Phosphoserine" evidence="9">
    <location>
        <position position="255"/>
    </location>
</feature>
<feature type="mutagenesis site" description="In os58; embryonic lethality." evidence="6">
    <location>
        <begin position="39"/>
        <end position="301"/>
    </location>
</feature>
<feature type="mutagenesis site" description="In vt34; significant (~20%) reduction in body length at adulthood. Males are unable to produce successful matings, as a result of abnormal tail morphology. Causes robust dopamine-dependent swimming-induced paralysis, as a result of changes in the expression or activity of the dopamine transporter dat-1. Hundred-fold reduction in dat-1 mRNA levels at larval stage L4. Paralysis occurs sooner on a dat-1 mutant background." evidence="10">
    <location>
        <begin position="104"/>
        <end position="301"/>
    </location>
</feature>
<feature type="mutagenesis site" description="In e1241; absent male-specific sense organs, known as rays. Affects heterodimer formation with bro-1 and therefore high affinity DNA binding." evidence="6 7">
    <original>I</original>
    <variation>K</variation>
    <location>
        <position position="112"/>
    </location>
</feature>
<feature type="mutagenesis site" description="Dramatically decreases the level of phosphorylation." evidence="9">
    <original>S</original>
    <variation>A</variation>
    <location>
        <position position="255"/>
    </location>
</feature>
<evidence type="ECO:0000250" key="1">
    <source>
        <dbReference type="UniProtKB" id="Q13950"/>
    </source>
</evidence>
<evidence type="ECO:0000255" key="2">
    <source>
        <dbReference type="PROSITE-ProRule" id="PRU00399"/>
    </source>
</evidence>
<evidence type="ECO:0000256" key="3">
    <source>
        <dbReference type="SAM" id="MobiDB-lite"/>
    </source>
</evidence>
<evidence type="ECO:0000269" key="4">
    <source>
    </source>
</evidence>
<evidence type="ECO:0000269" key="5">
    <source>
    </source>
</evidence>
<evidence type="ECO:0000269" key="6">
    <source>
    </source>
</evidence>
<evidence type="ECO:0000269" key="7">
    <source>
    </source>
</evidence>
<evidence type="ECO:0000269" key="8">
    <source>
    </source>
</evidence>
<evidence type="ECO:0000269" key="9">
    <source>
    </source>
</evidence>
<evidence type="ECO:0000269" key="10">
    <source>
    </source>
</evidence>
<evidence type="ECO:0000269" key="11">
    <source>
    </source>
</evidence>
<evidence type="ECO:0000305" key="12"/>
<evidence type="ECO:0000312" key="13">
    <source>
        <dbReference type="EMBL" id="AAD54940.1"/>
    </source>
</evidence>
<evidence type="ECO:0000312" key="14">
    <source>
        <dbReference type="EMBL" id="BAA77765.1"/>
    </source>
</evidence>
<evidence type="ECO:0000312" key="15">
    <source>
        <dbReference type="Proteomes" id="UP000001940"/>
    </source>
</evidence>
<evidence type="ECO:0000312" key="16">
    <source>
        <dbReference type="WormBase" id="B0414.2"/>
    </source>
</evidence>
<accession>G5EFQ5</accession>